<name>NAC71_ORYSJ</name>
<organism>
    <name type="scientific">Oryza sativa subsp. japonica</name>
    <name type="common">Rice</name>
    <dbReference type="NCBI Taxonomy" id="39947"/>
    <lineage>
        <taxon>Eukaryota</taxon>
        <taxon>Viridiplantae</taxon>
        <taxon>Streptophyta</taxon>
        <taxon>Embryophyta</taxon>
        <taxon>Tracheophyta</taxon>
        <taxon>Spermatophyta</taxon>
        <taxon>Magnoliopsida</taxon>
        <taxon>Liliopsida</taxon>
        <taxon>Poales</taxon>
        <taxon>Poaceae</taxon>
        <taxon>BOP clade</taxon>
        <taxon>Oryzoideae</taxon>
        <taxon>Oryzeae</taxon>
        <taxon>Oryzinae</taxon>
        <taxon>Oryza</taxon>
        <taxon>Oryza sativa</taxon>
    </lineage>
</organism>
<protein>
    <recommendedName>
        <fullName evidence="6">NAC domain-containing protein 71</fullName>
        <shortName evidence="6">ONAC071</shortName>
    </recommendedName>
    <alternativeName>
        <fullName evidence="5">OsNAC5</fullName>
    </alternativeName>
</protein>
<dbReference type="EMBL" id="AB028184">
    <property type="protein sequence ID" value="BAA89799.1"/>
    <property type="molecule type" value="mRNA"/>
</dbReference>
<dbReference type="EMBL" id="AC134047">
    <property type="protein sequence ID" value="AAY23268.1"/>
    <property type="molecule type" value="Genomic_DNA"/>
</dbReference>
<dbReference type="EMBL" id="DP000010">
    <property type="protein sequence ID" value="ABA91765.1"/>
    <property type="molecule type" value="Genomic_DNA"/>
</dbReference>
<dbReference type="EMBL" id="AP008217">
    <property type="protein sequence ID" value="BAF27764.1"/>
    <property type="molecule type" value="Genomic_DNA"/>
</dbReference>
<dbReference type="EMBL" id="AP014967">
    <property type="protein sequence ID" value="BAT12976.1"/>
    <property type="molecule type" value="Genomic_DNA"/>
</dbReference>
<dbReference type="EMBL" id="AK063399">
    <property type="status" value="NOT_ANNOTATED_CDS"/>
    <property type="molecule type" value="mRNA"/>
</dbReference>
<dbReference type="EMBL" id="AK102475">
    <property type="status" value="NOT_ANNOTATED_CDS"/>
    <property type="molecule type" value="mRNA"/>
</dbReference>
<dbReference type="PIR" id="T52344">
    <property type="entry name" value="T52344"/>
</dbReference>
<dbReference type="RefSeq" id="XP_015617286.1">
    <property type="nucleotide sequence ID" value="XM_015761800.1"/>
</dbReference>
<dbReference type="SMR" id="Q53NF7"/>
<dbReference type="FunCoup" id="Q53NF7">
    <property type="interactions" value="764"/>
</dbReference>
<dbReference type="STRING" id="39947.Q53NF7"/>
<dbReference type="PaxDb" id="39947-Q53NF7"/>
<dbReference type="EnsemblPlants" id="Os11t0184900-02">
    <property type="protein sequence ID" value="Os11t0184900-02"/>
    <property type="gene ID" value="Os11g0184900"/>
</dbReference>
<dbReference type="Gramene" id="Os11t0184900-02">
    <property type="protein sequence ID" value="Os11t0184900-02"/>
    <property type="gene ID" value="Os11g0184900"/>
</dbReference>
<dbReference type="KEGG" id="dosa:Os11g0184900"/>
<dbReference type="eggNOG" id="ENOG502QVRF">
    <property type="taxonomic scope" value="Eukaryota"/>
</dbReference>
<dbReference type="HOGENOM" id="CLU_035664_3_0_1"/>
<dbReference type="InParanoid" id="Q53NF7"/>
<dbReference type="OMA" id="KVEMADY"/>
<dbReference type="OrthoDB" id="626701at2759"/>
<dbReference type="Proteomes" id="UP000000763">
    <property type="component" value="Chromosome 11"/>
</dbReference>
<dbReference type="Proteomes" id="UP000059680">
    <property type="component" value="Chromosome 11"/>
</dbReference>
<dbReference type="ExpressionAtlas" id="Q53NF7">
    <property type="expression patterns" value="baseline and differential"/>
</dbReference>
<dbReference type="GO" id="GO:0005634">
    <property type="term" value="C:nucleus"/>
    <property type="evidence" value="ECO:0000314"/>
    <property type="project" value="UniProtKB"/>
</dbReference>
<dbReference type="GO" id="GO:0003677">
    <property type="term" value="F:DNA binding"/>
    <property type="evidence" value="ECO:0007669"/>
    <property type="project" value="UniProtKB-KW"/>
</dbReference>
<dbReference type="GO" id="GO:0045893">
    <property type="term" value="P:positive regulation of DNA-templated transcription"/>
    <property type="evidence" value="ECO:0000314"/>
    <property type="project" value="UniProtKB"/>
</dbReference>
<dbReference type="GO" id="GO:1901002">
    <property type="term" value="P:positive regulation of response to salt stress"/>
    <property type="evidence" value="ECO:0000315"/>
    <property type="project" value="UniProtKB"/>
</dbReference>
<dbReference type="FunFam" id="2.170.150.80:FF:000004">
    <property type="entry name" value="NAC transcription factor"/>
    <property type="match status" value="1"/>
</dbReference>
<dbReference type="Gene3D" id="2.170.150.80">
    <property type="entry name" value="NAC domain"/>
    <property type="match status" value="1"/>
</dbReference>
<dbReference type="InterPro" id="IPR003441">
    <property type="entry name" value="NAC-dom"/>
</dbReference>
<dbReference type="InterPro" id="IPR036093">
    <property type="entry name" value="NAC_dom_sf"/>
</dbReference>
<dbReference type="PANTHER" id="PTHR31719">
    <property type="entry name" value="NAC TRANSCRIPTION FACTOR 56"/>
    <property type="match status" value="1"/>
</dbReference>
<dbReference type="PANTHER" id="PTHR31719:SF94">
    <property type="entry name" value="PROTEIN ATAF2"/>
    <property type="match status" value="1"/>
</dbReference>
<dbReference type="Pfam" id="PF02365">
    <property type="entry name" value="NAM"/>
    <property type="match status" value="1"/>
</dbReference>
<dbReference type="SUPFAM" id="SSF101941">
    <property type="entry name" value="NAC domain"/>
    <property type="match status" value="1"/>
</dbReference>
<dbReference type="PROSITE" id="PS51005">
    <property type="entry name" value="NAC"/>
    <property type="match status" value="1"/>
</dbReference>
<accession>Q53NF7</accession>
<accession>A0A0P0XZV2</accession>
<accession>Q2R9M8</accession>
<accession>Q9MBC5</accession>
<keyword id="KW-0010">Activator</keyword>
<keyword id="KW-0238">DNA-binding</keyword>
<keyword id="KW-0539">Nucleus</keyword>
<keyword id="KW-1185">Reference proteome</keyword>
<keyword id="KW-0346">Stress response</keyword>
<keyword id="KW-0804">Transcription</keyword>
<keyword id="KW-0805">Transcription regulation</keyword>
<proteinExistence type="evidence at protein level"/>
<reference key="1">
    <citation type="journal article" date="2000" name="Mol. Gen. Genet.">
        <title>Molecular analysis of the NAC gene family in rice.</title>
        <authorList>
            <person name="Kikuchi K."/>
            <person name="Ueguchi-Tanaka M."/>
            <person name="Yoshida K.T."/>
            <person name="Nagato Y."/>
            <person name="Matsusoka M."/>
            <person name="Hirano H.-Y."/>
        </authorList>
    </citation>
    <scope>NUCLEOTIDE SEQUENCE [MRNA]</scope>
    <scope>TISSUE SPECIFICITY</scope>
</reference>
<reference key="2">
    <citation type="journal article" date="2005" name="BMC Biol.">
        <title>The sequence of rice chromosomes 11 and 12, rich in disease resistance genes and recent gene duplications.</title>
        <authorList>
            <consortium name="The rice chromosomes 11 and 12 sequencing consortia"/>
        </authorList>
    </citation>
    <scope>NUCLEOTIDE SEQUENCE [LARGE SCALE GENOMIC DNA]</scope>
    <source>
        <strain>cv. Nipponbare</strain>
    </source>
</reference>
<reference key="3">
    <citation type="journal article" date="2005" name="Nature">
        <title>The map-based sequence of the rice genome.</title>
        <authorList>
            <consortium name="International rice genome sequencing project (IRGSP)"/>
        </authorList>
    </citation>
    <scope>NUCLEOTIDE SEQUENCE [LARGE SCALE GENOMIC DNA]</scope>
    <source>
        <strain>cv. Nipponbare</strain>
    </source>
</reference>
<reference key="4">
    <citation type="journal article" date="2008" name="Nucleic Acids Res.">
        <title>The rice annotation project database (RAP-DB): 2008 update.</title>
        <authorList>
            <consortium name="The rice annotation project (RAP)"/>
        </authorList>
    </citation>
    <scope>GENOME REANNOTATION</scope>
    <source>
        <strain>cv. Nipponbare</strain>
    </source>
</reference>
<reference key="5">
    <citation type="journal article" date="2013" name="Rice">
        <title>Improvement of the Oryza sativa Nipponbare reference genome using next generation sequence and optical map data.</title>
        <authorList>
            <person name="Kawahara Y."/>
            <person name="de la Bastide M."/>
            <person name="Hamilton J.P."/>
            <person name="Kanamori H."/>
            <person name="McCombie W.R."/>
            <person name="Ouyang S."/>
            <person name="Schwartz D.C."/>
            <person name="Tanaka T."/>
            <person name="Wu J."/>
            <person name="Zhou S."/>
            <person name="Childs K.L."/>
            <person name="Davidson R.M."/>
            <person name="Lin H."/>
            <person name="Quesada-Ocampo L."/>
            <person name="Vaillancourt B."/>
            <person name="Sakai H."/>
            <person name="Lee S.S."/>
            <person name="Kim J."/>
            <person name="Numa H."/>
            <person name="Itoh T."/>
            <person name="Buell C.R."/>
            <person name="Matsumoto T."/>
        </authorList>
    </citation>
    <scope>GENOME REANNOTATION</scope>
    <source>
        <strain>cv. Nipponbare</strain>
    </source>
</reference>
<reference key="6">
    <citation type="journal article" date="2003" name="Science">
        <title>Collection, mapping, and annotation of over 28,000 cDNA clones from japonica rice.</title>
        <authorList>
            <consortium name="The rice full-length cDNA consortium"/>
        </authorList>
    </citation>
    <scope>NUCLEOTIDE SEQUENCE [LARGE SCALE MRNA]</scope>
    <source>
        <strain>cv. Nipponbare</strain>
    </source>
</reference>
<reference key="7">
    <citation type="journal article" date="2003" name="DNA Res.">
        <title>Comprehensive analysis of NAC family genes in Oryza sativa and Arabidopsis thaliana.</title>
        <authorList>
            <person name="Ooka H."/>
            <person name="Satoh K."/>
            <person name="Doi K."/>
            <person name="Nagata T."/>
            <person name="Otomo Y."/>
            <person name="Murakami K."/>
            <person name="Matsubara K."/>
            <person name="Osato N."/>
            <person name="Kawai J."/>
            <person name="Carninci P."/>
            <person name="Hayashizaki Y."/>
            <person name="Suzuki K."/>
            <person name="Kojima K."/>
            <person name="Takahara Y."/>
            <person name="Yamamoto K."/>
            <person name="Kikuchi S."/>
        </authorList>
    </citation>
    <scope>GENE FAMILY</scope>
    <scope>NOMENCLATURE</scope>
</reference>
<reference key="8">
    <citation type="journal article" date="2010" name="Mol. Genet. Genomics">
        <title>The abiotic stress-responsive NAC-type transcription factor OsNAC5 regulates stress-inducible genes and stress tolerance in rice.</title>
        <authorList>
            <person name="Takasaki H."/>
            <person name="Maruyama K."/>
            <person name="Kidokoro S."/>
            <person name="Ito Y."/>
            <person name="Fujita Y."/>
            <person name="Shinozaki K."/>
            <person name="Yamaguchi-Shinozaki K."/>
            <person name="Nakashima K."/>
        </authorList>
    </citation>
    <scope>FUNCTION</scope>
    <scope>INTERACTION WITH NAC048 AND NAC002</scope>
    <scope>SUBCELLULAR LOCATION</scope>
    <scope>INDUCTION</scope>
</reference>
<gene>
    <name evidence="6" type="primary">NAC071</name>
    <name evidence="5" type="synonym">NAC5</name>
    <name evidence="9" type="ordered locus">Os11g0184900</name>
    <name evidence="8" type="ordered locus">LOC_Os11g08210</name>
</gene>
<comment type="function">
    <text evidence="4">Transcription activator that binds to the promoter of the stress response gene LEA19. Involved in tolerance to abiotic stresses.</text>
</comment>
<comment type="subunit">
    <text evidence="4">Interacts with NAC048 and NAC002.</text>
</comment>
<comment type="subcellular location">
    <subcellularLocation>
        <location evidence="1 4">Nucleus</location>
    </subcellularLocation>
</comment>
<comment type="tissue specificity">
    <text evidence="3">Expressed in roots and embryo. Weakly expressed in callus.</text>
</comment>
<comment type="induction">
    <text evidence="4">Induced by dehydration, salt stress, cold stress, abscisic acid (ABA) and methyl jasmonate.</text>
</comment>
<comment type="domain">
    <text evidence="1">The NAC domain includes a DNA binding domain and a dimerization domain.</text>
</comment>
<comment type="miscellaneous">
    <text evidence="4">Plants overexpressing NAC071 exhibit improved tolerance to salt stress.</text>
</comment>
<evidence type="ECO:0000255" key="1">
    <source>
        <dbReference type="PROSITE-ProRule" id="PRU00353"/>
    </source>
</evidence>
<evidence type="ECO:0000256" key="2">
    <source>
        <dbReference type="SAM" id="MobiDB-lite"/>
    </source>
</evidence>
<evidence type="ECO:0000269" key="3">
    <source>
    </source>
</evidence>
<evidence type="ECO:0000269" key="4">
    <source>
    </source>
</evidence>
<evidence type="ECO:0000303" key="5">
    <source>
    </source>
</evidence>
<evidence type="ECO:0000303" key="6">
    <source>
    </source>
</evidence>
<evidence type="ECO:0000305" key="7"/>
<evidence type="ECO:0000312" key="8">
    <source>
        <dbReference type="EMBL" id="ABA91765.1"/>
    </source>
</evidence>
<evidence type="ECO:0000312" key="9">
    <source>
        <dbReference type="EMBL" id="BAT12976.1"/>
    </source>
</evidence>
<feature type="chain" id="PRO_0000132320" description="NAC domain-containing protein 71">
    <location>
        <begin position="1"/>
        <end position="329"/>
    </location>
</feature>
<feature type="domain" description="NAC" evidence="1">
    <location>
        <begin position="9"/>
        <end position="166"/>
    </location>
</feature>
<feature type="region of interest" description="Disordered" evidence="2">
    <location>
        <begin position="228"/>
        <end position="281"/>
    </location>
</feature>
<feature type="compositionally biased region" description="Basic and acidic residues" evidence="2">
    <location>
        <begin position="230"/>
        <end position="242"/>
    </location>
</feature>
<feature type="sequence conflict" description="In Ref. 6; AK063399." evidence="7" ref="6">
    <location>
        <position position="191"/>
    </location>
</feature>
<feature type="sequence conflict" description="In Ref. 6; AK102475." evidence="7" ref="6">
    <original>K</original>
    <variation>R</variation>
    <location>
        <position position="206"/>
    </location>
</feature>
<sequence>MECGGALQLPPGFRFHPTDDELVMYYLCRKCGGLPLAAPVIAEVDLYKFNPWDLPERAMGGEKEWYFFSPRDRKYPNGQRPNRAAGTGYWKATGADKPVGSPRAVAIKKALVFYAGKPPKGVKTNWIMHEYRLADVDRSAAARKLSKSSHNALRLDDWVLCRIYNKKGVIERYDTVDAGEDVKPAAAAAAAKGGRIGGGGGAAAMKVELSDYGFYDQEPESEMLCFDRSGSADRDSMPRLHTDSSGSEHVLSPSPSPDDFPGGGDHDYAESQPSGGCGGWPGVDWAAVGDDGFVIDSSLFELPSPAAFSRAAGDGAAFGDMFTYLQKPF</sequence>